<comment type="function">
    <text>This protein promotes the GTP-dependent binding of aminoacyl-tRNA to the A-site of ribosomes during protein biosynthesis.</text>
</comment>
<comment type="subcellular location">
    <subcellularLocation>
        <location>Cytoplasm</location>
    </subcellularLocation>
</comment>
<comment type="similarity">
    <text evidence="3">Belongs to the TRAFAC class translation factor GTPase superfamily. Classic translation factor GTPase family. EF-Tu/EF-1A subfamily.</text>
</comment>
<evidence type="ECO:0000250" key="1"/>
<evidence type="ECO:0000250" key="2">
    <source>
        <dbReference type="UniProtKB" id="P02994"/>
    </source>
</evidence>
<evidence type="ECO:0000305" key="3"/>
<feature type="initiator methionine" description="Removed" evidence="2">
    <location>
        <position position="1"/>
    </location>
</feature>
<feature type="chain" id="PRO_0000090963" description="Elongation factor 1-alpha">
    <location>
        <begin position="2"/>
        <end position="462"/>
    </location>
</feature>
<feature type="domain" description="tr-type G">
    <location>
        <begin position="5"/>
        <end position="242"/>
    </location>
</feature>
<feature type="region of interest" description="G1" evidence="1">
    <location>
        <begin position="14"/>
        <end position="21"/>
    </location>
</feature>
<feature type="region of interest" description="G2" evidence="1">
    <location>
        <begin position="70"/>
        <end position="74"/>
    </location>
</feature>
<feature type="region of interest" description="G3" evidence="1">
    <location>
        <begin position="91"/>
        <end position="94"/>
    </location>
</feature>
<feature type="region of interest" description="G4" evidence="1">
    <location>
        <begin position="153"/>
        <end position="156"/>
    </location>
</feature>
<feature type="region of interest" description="G5" evidence="1">
    <location>
        <begin position="192"/>
        <end position="194"/>
    </location>
</feature>
<feature type="binding site" evidence="1">
    <location>
        <begin position="14"/>
        <end position="21"/>
    </location>
    <ligand>
        <name>GTP</name>
        <dbReference type="ChEBI" id="CHEBI:37565"/>
    </ligand>
</feature>
<feature type="binding site" evidence="1">
    <location>
        <begin position="91"/>
        <end position="95"/>
    </location>
    <ligand>
        <name>GTP</name>
        <dbReference type="ChEBI" id="CHEBI:37565"/>
    </ligand>
</feature>
<feature type="binding site" evidence="1">
    <location>
        <begin position="153"/>
        <end position="156"/>
    </location>
    <ligand>
        <name>GTP</name>
        <dbReference type="ChEBI" id="CHEBI:37565"/>
    </ligand>
</feature>
<feature type="modified residue" description="N,N,N-trimethylglycine" evidence="2">
    <location>
        <position position="2"/>
    </location>
</feature>
<feature type="modified residue" description="N6,N6-dimethyllysine; alternate" evidence="2">
    <location>
        <position position="3"/>
    </location>
</feature>
<feature type="modified residue" description="N6-methyllysine; alternate" evidence="2">
    <location>
        <position position="3"/>
    </location>
</feature>
<feature type="modified residue" description="N6-methyllysine" evidence="2">
    <location>
        <position position="30"/>
    </location>
</feature>
<feature type="modified residue" description="N6,N6,N6-trimethyllysine" evidence="2">
    <location>
        <position position="79"/>
    </location>
</feature>
<feature type="modified residue" description="N6,N6-dimethyllysine; alternate" evidence="2">
    <location>
        <position position="318"/>
    </location>
</feature>
<feature type="modified residue" description="N6-methyllysine; alternate" evidence="2">
    <location>
        <position position="318"/>
    </location>
</feature>
<feature type="modified residue" description="N6-methyllysine" evidence="2">
    <location>
        <position position="392"/>
    </location>
</feature>
<protein>
    <recommendedName>
        <fullName>Elongation factor 1-alpha</fullName>
        <shortName>EF-1-alpha</shortName>
    </recommendedName>
</protein>
<reference key="1">
    <citation type="journal article" date="2000" name="Plant Biol.">
        <title>Isolation and characterisation of Pitef1 encoding the translation elongation factor EF-1-alpha of the root endophyte Piriformospora indica.</title>
        <authorList>
            <person name="Buetehorn B."/>
            <person name="Rhody D."/>
            <person name="Franken P."/>
        </authorList>
    </citation>
    <scope>NUCLEOTIDE SEQUENCE [GENOMIC DNA / MRNA]</scope>
    <source>
        <tissue>Hyphae</tissue>
    </source>
</reference>
<proteinExistence type="evidence at transcript level"/>
<keyword id="KW-0963">Cytoplasm</keyword>
<keyword id="KW-0251">Elongation factor</keyword>
<keyword id="KW-0342">GTP-binding</keyword>
<keyword id="KW-0488">Methylation</keyword>
<keyword id="KW-0547">Nucleotide-binding</keyword>
<keyword id="KW-0648">Protein biosynthesis</keyword>
<organism>
    <name type="scientific">Serendipita indica</name>
    <name type="common">Root endophyte fungus</name>
    <name type="synonym">Piriformospora indica</name>
    <dbReference type="NCBI Taxonomy" id="65672"/>
    <lineage>
        <taxon>Eukaryota</taxon>
        <taxon>Fungi</taxon>
        <taxon>Dikarya</taxon>
        <taxon>Basidiomycota</taxon>
        <taxon>Agaricomycotina</taxon>
        <taxon>Agaricomycetes</taxon>
        <taxon>Sebacinales</taxon>
        <taxon>Serendipitaceae</taxon>
        <taxon>Serendipita</taxon>
    </lineage>
</organism>
<dbReference type="EMBL" id="AJ249912">
    <property type="protein sequence ID" value="CAC10566.1"/>
    <property type="molecule type" value="mRNA"/>
</dbReference>
<dbReference type="EMBL" id="AJ249911">
    <property type="protein sequence ID" value="CAC10565.1"/>
    <property type="molecule type" value="Genomic_DNA"/>
</dbReference>
<dbReference type="SMR" id="Q9HDF6"/>
<dbReference type="GO" id="GO:0005737">
    <property type="term" value="C:cytoplasm"/>
    <property type="evidence" value="ECO:0007669"/>
    <property type="project" value="UniProtKB-SubCell"/>
</dbReference>
<dbReference type="GO" id="GO:0005525">
    <property type="term" value="F:GTP binding"/>
    <property type="evidence" value="ECO:0007669"/>
    <property type="project" value="UniProtKB-KW"/>
</dbReference>
<dbReference type="GO" id="GO:0003924">
    <property type="term" value="F:GTPase activity"/>
    <property type="evidence" value="ECO:0007669"/>
    <property type="project" value="InterPro"/>
</dbReference>
<dbReference type="GO" id="GO:0003746">
    <property type="term" value="F:translation elongation factor activity"/>
    <property type="evidence" value="ECO:0007669"/>
    <property type="project" value="UniProtKB-KW"/>
</dbReference>
<dbReference type="CDD" id="cd01883">
    <property type="entry name" value="EF1_alpha"/>
    <property type="match status" value="1"/>
</dbReference>
<dbReference type="CDD" id="cd03693">
    <property type="entry name" value="EF1_alpha_II"/>
    <property type="match status" value="1"/>
</dbReference>
<dbReference type="CDD" id="cd03705">
    <property type="entry name" value="EF1_alpha_III"/>
    <property type="match status" value="1"/>
</dbReference>
<dbReference type="FunFam" id="2.40.30.10:FF:000003">
    <property type="entry name" value="Elongation factor 1-alpha"/>
    <property type="match status" value="1"/>
</dbReference>
<dbReference type="FunFam" id="2.40.30.10:FF:000005">
    <property type="entry name" value="Elongation factor 1-alpha"/>
    <property type="match status" value="1"/>
</dbReference>
<dbReference type="FunFam" id="3.40.50.300:FF:000211">
    <property type="entry name" value="Elongation factor 1-alpha"/>
    <property type="match status" value="1"/>
</dbReference>
<dbReference type="Gene3D" id="3.40.50.300">
    <property type="entry name" value="P-loop containing nucleotide triphosphate hydrolases"/>
    <property type="match status" value="1"/>
</dbReference>
<dbReference type="Gene3D" id="2.40.30.10">
    <property type="entry name" value="Translation factors"/>
    <property type="match status" value="2"/>
</dbReference>
<dbReference type="HAMAP" id="MF_00118_A">
    <property type="entry name" value="EF_Tu_A"/>
    <property type="match status" value="1"/>
</dbReference>
<dbReference type="InterPro" id="IPR004161">
    <property type="entry name" value="EFTu-like_2"/>
</dbReference>
<dbReference type="InterPro" id="IPR031157">
    <property type="entry name" value="G_TR_CS"/>
</dbReference>
<dbReference type="InterPro" id="IPR054696">
    <property type="entry name" value="GTP-eEF1A_C"/>
</dbReference>
<dbReference type="InterPro" id="IPR027417">
    <property type="entry name" value="P-loop_NTPase"/>
</dbReference>
<dbReference type="InterPro" id="IPR000795">
    <property type="entry name" value="T_Tr_GTP-bd_dom"/>
</dbReference>
<dbReference type="InterPro" id="IPR050100">
    <property type="entry name" value="TRAFAC_GTPase_members"/>
</dbReference>
<dbReference type="InterPro" id="IPR009000">
    <property type="entry name" value="Transl_B-barrel_sf"/>
</dbReference>
<dbReference type="InterPro" id="IPR009001">
    <property type="entry name" value="Transl_elong_EF1A/Init_IF2_C"/>
</dbReference>
<dbReference type="InterPro" id="IPR004539">
    <property type="entry name" value="Transl_elong_EF1A_euk/arc"/>
</dbReference>
<dbReference type="NCBIfam" id="TIGR00483">
    <property type="entry name" value="EF-1_alpha"/>
    <property type="match status" value="1"/>
</dbReference>
<dbReference type="NCBIfam" id="NF008969">
    <property type="entry name" value="PRK12317.1"/>
    <property type="match status" value="1"/>
</dbReference>
<dbReference type="PANTHER" id="PTHR23115">
    <property type="entry name" value="TRANSLATION FACTOR"/>
    <property type="match status" value="1"/>
</dbReference>
<dbReference type="Pfam" id="PF22594">
    <property type="entry name" value="GTP-eEF1A_C"/>
    <property type="match status" value="1"/>
</dbReference>
<dbReference type="Pfam" id="PF00009">
    <property type="entry name" value="GTP_EFTU"/>
    <property type="match status" value="1"/>
</dbReference>
<dbReference type="Pfam" id="PF03144">
    <property type="entry name" value="GTP_EFTU_D2"/>
    <property type="match status" value="1"/>
</dbReference>
<dbReference type="PRINTS" id="PR00315">
    <property type="entry name" value="ELONGATNFCT"/>
</dbReference>
<dbReference type="SUPFAM" id="SSF50465">
    <property type="entry name" value="EF-Tu/eEF-1alpha/eIF2-gamma C-terminal domain"/>
    <property type="match status" value="1"/>
</dbReference>
<dbReference type="SUPFAM" id="SSF52540">
    <property type="entry name" value="P-loop containing nucleoside triphosphate hydrolases"/>
    <property type="match status" value="1"/>
</dbReference>
<dbReference type="SUPFAM" id="SSF50447">
    <property type="entry name" value="Translation proteins"/>
    <property type="match status" value="1"/>
</dbReference>
<dbReference type="PROSITE" id="PS00301">
    <property type="entry name" value="G_TR_1"/>
    <property type="match status" value="1"/>
</dbReference>
<dbReference type="PROSITE" id="PS51722">
    <property type="entry name" value="G_TR_2"/>
    <property type="match status" value="1"/>
</dbReference>
<gene>
    <name type="primary">TEF1</name>
    <name type="synonym">TEF</name>
</gene>
<name>EF1A_SERIN</name>
<sequence length="462" mass="50052">MGKEKAHVNVVVIGHVDSGKSTTTGHLIYKCGGIDKRTIEKFEKEAAELGKGSFKYAWVLDKLKAERERGITIDIALWKSETPKYMVTVIDAPGHRDFIKNMITGTSQADCAILIIAGGTGEFEAGISKDGQTREHALLAFTLGVRQLIVAVNKMDTTNWSEARFNEIVKETSNFIKKVGYNPKTVAFVPISGWHGDNMLEPSTNMPWYKGWSKEVKGSSSPATGKTLVDAIDAIEPPVRPSDKPLRLPLQDVYKIGGIGTVPVGRVETGIIKPGMVVSFAPSNVTTEVKSVEMHHEQLAEGLPGDNVGFNVKNVSVKDIRRGDVASDSKNDPAKEAASFNAQVIVLNHPGQIGAGYAPVLDCHTAHIACKFSELIEKIDRRTGKTMEAAPKFVKSGDAAIVKLVPSKPMCVESYNEYPPLGRFAVRDMRQTVAVGVIKSVEKTEGKGGKVTKSAEKAAKKK</sequence>
<accession>Q9HDF6</accession>